<organism>
    <name type="scientific">Actinobacillus succinogenes (strain ATCC 55618 / DSM 22257 / CCUG 43843 / 130Z)</name>
    <dbReference type="NCBI Taxonomy" id="339671"/>
    <lineage>
        <taxon>Bacteria</taxon>
        <taxon>Pseudomonadati</taxon>
        <taxon>Pseudomonadota</taxon>
        <taxon>Gammaproteobacteria</taxon>
        <taxon>Pasteurellales</taxon>
        <taxon>Pasteurellaceae</taxon>
        <taxon>Actinobacillus</taxon>
    </lineage>
</organism>
<feature type="chain" id="PRO_1000071696" description="4-hydroxy-3-methylbut-2-enyl diphosphate reductase">
    <location>
        <begin position="1"/>
        <end position="314"/>
    </location>
</feature>
<feature type="active site" description="Proton donor" evidence="1">
    <location>
        <position position="126"/>
    </location>
</feature>
<feature type="binding site" evidence="1">
    <location>
        <position position="12"/>
    </location>
    <ligand>
        <name>[4Fe-4S] cluster</name>
        <dbReference type="ChEBI" id="CHEBI:49883"/>
    </ligand>
</feature>
<feature type="binding site" evidence="1">
    <location>
        <position position="41"/>
    </location>
    <ligand>
        <name>(2E)-4-hydroxy-3-methylbut-2-enyl diphosphate</name>
        <dbReference type="ChEBI" id="CHEBI:128753"/>
    </ligand>
</feature>
<feature type="binding site" evidence="1">
    <location>
        <position position="41"/>
    </location>
    <ligand>
        <name>dimethylallyl diphosphate</name>
        <dbReference type="ChEBI" id="CHEBI:57623"/>
    </ligand>
</feature>
<feature type="binding site" evidence="1">
    <location>
        <position position="41"/>
    </location>
    <ligand>
        <name>isopentenyl diphosphate</name>
        <dbReference type="ChEBI" id="CHEBI:128769"/>
    </ligand>
</feature>
<feature type="binding site" evidence="1">
    <location>
        <position position="74"/>
    </location>
    <ligand>
        <name>(2E)-4-hydroxy-3-methylbut-2-enyl diphosphate</name>
        <dbReference type="ChEBI" id="CHEBI:128753"/>
    </ligand>
</feature>
<feature type="binding site" evidence="1">
    <location>
        <position position="74"/>
    </location>
    <ligand>
        <name>dimethylallyl diphosphate</name>
        <dbReference type="ChEBI" id="CHEBI:57623"/>
    </ligand>
</feature>
<feature type="binding site" evidence="1">
    <location>
        <position position="74"/>
    </location>
    <ligand>
        <name>isopentenyl diphosphate</name>
        <dbReference type="ChEBI" id="CHEBI:128769"/>
    </ligand>
</feature>
<feature type="binding site" evidence="1">
    <location>
        <position position="96"/>
    </location>
    <ligand>
        <name>[4Fe-4S] cluster</name>
        <dbReference type="ChEBI" id="CHEBI:49883"/>
    </ligand>
</feature>
<feature type="binding site" evidence="1">
    <location>
        <position position="124"/>
    </location>
    <ligand>
        <name>(2E)-4-hydroxy-3-methylbut-2-enyl diphosphate</name>
        <dbReference type="ChEBI" id="CHEBI:128753"/>
    </ligand>
</feature>
<feature type="binding site" evidence="1">
    <location>
        <position position="124"/>
    </location>
    <ligand>
        <name>dimethylallyl diphosphate</name>
        <dbReference type="ChEBI" id="CHEBI:57623"/>
    </ligand>
</feature>
<feature type="binding site" evidence="1">
    <location>
        <position position="124"/>
    </location>
    <ligand>
        <name>isopentenyl diphosphate</name>
        <dbReference type="ChEBI" id="CHEBI:128769"/>
    </ligand>
</feature>
<feature type="binding site" evidence="1">
    <location>
        <position position="167"/>
    </location>
    <ligand>
        <name>(2E)-4-hydroxy-3-methylbut-2-enyl diphosphate</name>
        <dbReference type="ChEBI" id="CHEBI:128753"/>
    </ligand>
</feature>
<feature type="binding site" evidence="1">
    <location>
        <position position="197"/>
    </location>
    <ligand>
        <name>[4Fe-4S] cluster</name>
        <dbReference type="ChEBI" id="CHEBI:49883"/>
    </ligand>
</feature>
<feature type="binding site" evidence="1">
    <location>
        <position position="225"/>
    </location>
    <ligand>
        <name>(2E)-4-hydroxy-3-methylbut-2-enyl diphosphate</name>
        <dbReference type="ChEBI" id="CHEBI:128753"/>
    </ligand>
</feature>
<feature type="binding site" evidence="1">
    <location>
        <position position="225"/>
    </location>
    <ligand>
        <name>dimethylallyl diphosphate</name>
        <dbReference type="ChEBI" id="CHEBI:57623"/>
    </ligand>
</feature>
<feature type="binding site" evidence="1">
    <location>
        <position position="225"/>
    </location>
    <ligand>
        <name>isopentenyl diphosphate</name>
        <dbReference type="ChEBI" id="CHEBI:128769"/>
    </ligand>
</feature>
<feature type="binding site" evidence="1">
    <location>
        <position position="226"/>
    </location>
    <ligand>
        <name>(2E)-4-hydroxy-3-methylbut-2-enyl diphosphate</name>
        <dbReference type="ChEBI" id="CHEBI:128753"/>
    </ligand>
</feature>
<feature type="binding site" evidence="1">
    <location>
        <position position="226"/>
    </location>
    <ligand>
        <name>dimethylallyl diphosphate</name>
        <dbReference type="ChEBI" id="CHEBI:57623"/>
    </ligand>
</feature>
<feature type="binding site" evidence="1">
    <location>
        <position position="226"/>
    </location>
    <ligand>
        <name>isopentenyl diphosphate</name>
        <dbReference type="ChEBI" id="CHEBI:128769"/>
    </ligand>
</feature>
<feature type="binding site" evidence="1">
    <location>
        <position position="227"/>
    </location>
    <ligand>
        <name>(2E)-4-hydroxy-3-methylbut-2-enyl diphosphate</name>
        <dbReference type="ChEBI" id="CHEBI:128753"/>
    </ligand>
</feature>
<feature type="binding site" evidence="1">
    <location>
        <position position="227"/>
    </location>
    <ligand>
        <name>dimethylallyl diphosphate</name>
        <dbReference type="ChEBI" id="CHEBI:57623"/>
    </ligand>
</feature>
<feature type="binding site" evidence="1">
    <location>
        <position position="227"/>
    </location>
    <ligand>
        <name>isopentenyl diphosphate</name>
        <dbReference type="ChEBI" id="CHEBI:128769"/>
    </ligand>
</feature>
<feature type="binding site" evidence="1">
    <location>
        <position position="269"/>
    </location>
    <ligand>
        <name>(2E)-4-hydroxy-3-methylbut-2-enyl diphosphate</name>
        <dbReference type="ChEBI" id="CHEBI:128753"/>
    </ligand>
</feature>
<feature type="binding site" evidence="1">
    <location>
        <position position="269"/>
    </location>
    <ligand>
        <name>dimethylallyl diphosphate</name>
        <dbReference type="ChEBI" id="CHEBI:57623"/>
    </ligand>
</feature>
<feature type="binding site" evidence="1">
    <location>
        <position position="269"/>
    </location>
    <ligand>
        <name>isopentenyl diphosphate</name>
        <dbReference type="ChEBI" id="CHEBI:128769"/>
    </ligand>
</feature>
<dbReference type="EC" id="1.17.7.4" evidence="1"/>
<dbReference type="EMBL" id="CP000746">
    <property type="protein sequence ID" value="ABR75225.1"/>
    <property type="molecule type" value="Genomic_DNA"/>
</dbReference>
<dbReference type="RefSeq" id="WP_012073602.1">
    <property type="nucleotide sequence ID" value="NC_009655.1"/>
</dbReference>
<dbReference type="SMR" id="A6VQH8"/>
<dbReference type="STRING" id="339671.Asuc_1874"/>
<dbReference type="KEGG" id="asu:Asuc_1874"/>
<dbReference type="eggNOG" id="COG0761">
    <property type="taxonomic scope" value="Bacteria"/>
</dbReference>
<dbReference type="HOGENOM" id="CLU_027486_1_0_6"/>
<dbReference type="OrthoDB" id="9804068at2"/>
<dbReference type="UniPathway" id="UPA00056">
    <property type="reaction ID" value="UER00097"/>
</dbReference>
<dbReference type="UniPathway" id="UPA00059">
    <property type="reaction ID" value="UER00105"/>
</dbReference>
<dbReference type="Proteomes" id="UP000001114">
    <property type="component" value="Chromosome"/>
</dbReference>
<dbReference type="GO" id="GO:0051539">
    <property type="term" value="F:4 iron, 4 sulfur cluster binding"/>
    <property type="evidence" value="ECO:0007669"/>
    <property type="project" value="UniProtKB-UniRule"/>
</dbReference>
<dbReference type="GO" id="GO:0051745">
    <property type="term" value="F:4-hydroxy-3-methylbut-2-enyl diphosphate reductase activity"/>
    <property type="evidence" value="ECO:0007669"/>
    <property type="project" value="UniProtKB-UniRule"/>
</dbReference>
<dbReference type="GO" id="GO:0046872">
    <property type="term" value="F:metal ion binding"/>
    <property type="evidence" value="ECO:0007669"/>
    <property type="project" value="UniProtKB-KW"/>
</dbReference>
<dbReference type="GO" id="GO:0050992">
    <property type="term" value="P:dimethylallyl diphosphate biosynthetic process"/>
    <property type="evidence" value="ECO:0007669"/>
    <property type="project" value="UniProtKB-UniRule"/>
</dbReference>
<dbReference type="GO" id="GO:0019288">
    <property type="term" value="P:isopentenyl diphosphate biosynthetic process, methylerythritol 4-phosphate pathway"/>
    <property type="evidence" value="ECO:0007669"/>
    <property type="project" value="UniProtKB-UniRule"/>
</dbReference>
<dbReference type="GO" id="GO:0016114">
    <property type="term" value="P:terpenoid biosynthetic process"/>
    <property type="evidence" value="ECO:0007669"/>
    <property type="project" value="UniProtKB-UniRule"/>
</dbReference>
<dbReference type="CDD" id="cd13944">
    <property type="entry name" value="lytB_ispH"/>
    <property type="match status" value="1"/>
</dbReference>
<dbReference type="Gene3D" id="3.40.50.11270">
    <property type="match status" value="1"/>
</dbReference>
<dbReference type="Gene3D" id="3.40.1010.20">
    <property type="entry name" value="4-hydroxy-3-methylbut-2-enyl diphosphate reductase, catalytic domain"/>
    <property type="match status" value="2"/>
</dbReference>
<dbReference type="HAMAP" id="MF_00191">
    <property type="entry name" value="IspH"/>
    <property type="match status" value="1"/>
</dbReference>
<dbReference type="InterPro" id="IPR003451">
    <property type="entry name" value="LytB/IspH"/>
</dbReference>
<dbReference type="NCBIfam" id="TIGR00216">
    <property type="entry name" value="ispH_lytB"/>
    <property type="match status" value="1"/>
</dbReference>
<dbReference type="NCBIfam" id="NF002188">
    <property type="entry name" value="PRK01045.1-2"/>
    <property type="match status" value="1"/>
</dbReference>
<dbReference type="NCBIfam" id="NF002190">
    <property type="entry name" value="PRK01045.1-4"/>
    <property type="match status" value="1"/>
</dbReference>
<dbReference type="PANTHER" id="PTHR30426">
    <property type="entry name" value="4-HYDROXY-3-METHYLBUT-2-ENYL DIPHOSPHATE REDUCTASE"/>
    <property type="match status" value="1"/>
</dbReference>
<dbReference type="PANTHER" id="PTHR30426:SF0">
    <property type="entry name" value="4-HYDROXY-3-METHYLBUT-2-ENYL DIPHOSPHATE REDUCTASE"/>
    <property type="match status" value="1"/>
</dbReference>
<dbReference type="Pfam" id="PF02401">
    <property type="entry name" value="LYTB"/>
    <property type="match status" value="1"/>
</dbReference>
<gene>
    <name evidence="1" type="primary">ispH</name>
    <name type="ordered locus">Asuc_1874</name>
</gene>
<name>ISPH_ACTSZ</name>
<evidence type="ECO:0000255" key="1">
    <source>
        <dbReference type="HAMAP-Rule" id="MF_00191"/>
    </source>
</evidence>
<comment type="function">
    <text evidence="1">Catalyzes the conversion of 1-hydroxy-2-methyl-2-(E)-butenyl 4-diphosphate (HMBPP) into a mixture of isopentenyl diphosphate (IPP) and dimethylallyl diphosphate (DMAPP). Acts in the terminal step of the DOXP/MEP pathway for isoprenoid precursor biosynthesis.</text>
</comment>
<comment type="catalytic activity">
    <reaction evidence="1">
        <text>isopentenyl diphosphate + 2 oxidized [2Fe-2S]-[ferredoxin] + H2O = (2E)-4-hydroxy-3-methylbut-2-enyl diphosphate + 2 reduced [2Fe-2S]-[ferredoxin] + 2 H(+)</text>
        <dbReference type="Rhea" id="RHEA:24488"/>
        <dbReference type="Rhea" id="RHEA-COMP:10000"/>
        <dbReference type="Rhea" id="RHEA-COMP:10001"/>
        <dbReference type="ChEBI" id="CHEBI:15377"/>
        <dbReference type="ChEBI" id="CHEBI:15378"/>
        <dbReference type="ChEBI" id="CHEBI:33737"/>
        <dbReference type="ChEBI" id="CHEBI:33738"/>
        <dbReference type="ChEBI" id="CHEBI:128753"/>
        <dbReference type="ChEBI" id="CHEBI:128769"/>
        <dbReference type="EC" id="1.17.7.4"/>
    </reaction>
</comment>
<comment type="catalytic activity">
    <reaction evidence="1">
        <text>dimethylallyl diphosphate + 2 oxidized [2Fe-2S]-[ferredoxin] + H2O = (2E)-4-hydroxy-3-methylbut-2-enyl diphosphate + 2 reduced [2Fe-2S]-[ferredoxin] + 2 H(+)</text>
        <dbReference type="Rhea" id="RHEA:24825"/>
        <dbReference type="Rhea" id="RHEA-COMP:10000"/>
        <dbReference type="Rhea" id="RHEA-COMP:10001"/>
        <dbReference type="ChEBI" id="CHEBI:15377"/>
        <dbReference type="ChEBI" id="CHEBI:15378"/>
        <dbReference type="ChEBI" id="CHEBI:33737"/>
        <dbReference type="ChEBI" id="CHEBI:33738"/>
        <dbReference type="ChEBI" id="CHEBI:57623"/>
        <dbReference type="ChEBI" id="CHEBI:128753"/>
        <dbReference type="EC" id="1.17.7.4"/>
    </reaction>
</comment>
<comment type="cofactor">
    <cofactor evidence="1">
        <name>[4Fe-4S] cluster</name>
        <dbReference type="ChEBI" id="CHEBI:49883"/>
    </cofactor>
    <text evidence="1">Binds 1 [4Fe-4S] cluster per subunit.</text>
</comment>
<comment type="pathway">
    <text evidence="1">Isoprenoid biosynthesis; dimethylallyl diphosphate biosynthesis; dimethylallyl diphosphate from (2E)-4-hydroxy-3-methylbutenyl diphosphate: step 1/1.</text>
</comment>
<comment type="pathway">
    <text evidence="1">Isoprenoid biosynthesis; isopentenyl diphosphate biosynthesis via DXP pathway; isopentenyl diphosphate from 1-deoxy-D-xylulose 5-phosphate: step 6/6.</text>
</comment>
<comment type="similarity">
    <text evidence="1">Belongs to the IspH family.</text>
</comment>
<protein>
    <recommendedName>
        <fullName evidence="1">4-hydroxy-3-methylbut-2-enyl diphosphate reductase</fullName>
        <shortName evidence="1">HMBPP reductase</shortName>
        <ecNumber evidence="1">1.17.7.4</ecNumber>
    </recommendedName>
</protein>
<keyword id="KW-0004">4Fe-4S</keyword>
<keyword id="KW-0408">Iron</keyword>
<keyword id="KW-0411">Iron-sulfur</keyword>
<keyword id="KW-0414">Isoprene biosynthesis</keyword>
<keyword id="KW-0479">Metal-binding</keyword>
<keyword id="KW-0560">Oxidoreductase</keyword>
<keyword id="KW-1185">Reference proteome</keyword>
<accession>A6VQH8</accession>
<sequence length="314" mass="34567">MKIILANPRGFCAGVDRAISIVELALEIHGAPIYVRHEVVHNRFVVNGLRERGAVFVEELDEVPDGAIVIFSAHGVSQAVRQEAKRRNLKVFDATCPLVTKVHMQVARASRKGTKAILIGHEGHPEVQGTMGQYDNRDGGIFLVENVEDIAKLHLRDDDDLTFMTQTTLSIDDTADVIEALKQKYPNIQGPRKNDICYATTNRQQAVRDLAEQCDLVIVIGSKNSSNSNRLAELANRMGTPAKLLDDANDVDPAWLENVDIIGVTAGASAPEVLVQSVVSRLKELGVDTVEELTGCEENMFFEVPKELRINEAH</sequence>
<proteinExistence type="inferred from homology"/>
<reference key="1">
    <citation type="journal article" date="2010" name="BMC Genomics">
        <title>A genomic perspective on the potential of Actinobacillus succinogenes for industrial succinate production.</title>
        <authorList>
            <person name="McKinlay J.B."/>
            <person name="Laivenieks M."/>
            <person name="Schindler B.D."/>
            <person name="McKinlay A.A."/>
            <person name="Siddaramappa S."/>
            <person name="Challacombe J.F."/>
            <person name="Lowry S.R."/>
            <person name="Clum A."/>
            <person name="Lapidus A.L."/>
            <person name="Burkhart K.B."/>
            <person name="Harkins V."/>
            <person name="Vieille C."/>
        </authorList>
    </citation>
    <scope>NUCLEOTIDE SEQUENCE [LARGE SCALE GENOMIC DNA]</scope>
    <source>
        <strain>ATCC 55618 / DSM 22257 / CCUG 43843 / 130Z</strain>
    </source>
</reference>